<organism>
    <name type="scientific">Desulforudis audaxviator (strain MP104C)</name>
    <dbReference type="NCBI Taxonomy" id="477974"/>
    <lineage>
        <taxon>Bacteria</taxon>
        <taxon>Bacillati</taxon>
        <taxon>Bacillota</taxon>
        <taxon>Clostridia</taxon>
        <taxon>Thermoanaerobacterales</taxon>
        <taxon>Candidatus Desulforudaceae</taxon>
        <taxon>Candidatus Desulforudis</taxon>
    </lineage>
</organism>
<proteinExistence type="inferred from homology"/>
<protein>
    <recommendedName>
        <fullName evidence="1">GTPase Obg</fullName>
        <ecNumber evidence="1">3.6.5.-</ecNumber>
    </recommendedName>
    <alternativeName>
        <fullName evidence="1">GTP-binding protein Obg</fullName>
    </alternativeName>
</protein>
<comment type="function">
    <text evidence="1">An essential GTPase which binds GTP, GDP and possibly (p)ppGpp with moderate affinity, with high nucleotide exchange rates and a fairly low GTP hydrolysis rate. Plays a role in control of the cell cycle, stress response, ribosome biogenesis and in those bacteria that undergo differentiation, in morphogenesis control.</text>
</comment>
<comment type="cofactor">
    <cofactor evidence="1">
        <name>Mg(2+)</name>
        <dbReference type="ChEBI" id="CHEBI:18420"/>
    </cofactor>
</comment>
<comment type="subunit">
    <text evidence="1">Monomer.</text>
</comment>
<comment type="subcellular location">
    <subcellularLocation>
        <location evidence="1">Cytoplasm</location>
    </subcellularLocation>
</comment>
<comment type="similarity">
    <text evidence="1">Belongs to the TRAFAC class OBG-HflX-like GTPase superfamily. OBG GTPase family.</text>
</comment>
<gene>
    <name evidence="1" type="primary">obg</name>
    <name type="ordered locus">Daud_1873</name>
</gene>
<sequence>MFKDYAKIHVKAGDGGNGCVAFRREKYVPYGGPSGGDGGRGGHVILRADGGLRTLVDFRYRTHYKAGRGTHGQGKNMHGRKGEDLVLRVPVGTEVRRAGDATLMADLTVDGQEYRVARGGRGGRGNARFAAANRRAPSFAEKGEPGEELWLELELKLLADVGLVGFPNAGKSTIISKVSAARPKIADYPFTTLEPHLGVVRVGEGESFVLADIPGLIEGAHRGAGLGHRFLRHVERTRVLIHVVDVSGREGRDPVADFEAINRELAAYDPRLAARPQLVAANKTDLPGARDNARRLAEAAGGRYEVFEISALTGEGLDRLIYRTYRLLETIPVEPAPAPIVPDERETDVTLFLVAREGNTYVVEGEGIERRVAMTDLDNPEAVQHLQELLVRIGVEDALRAEGIRPGDNVRIGRFEFEYSENPTG</sequence>
<reference key="1">
    <citation type="submission" date="2007-10" db="EMBL/GenBank/DDBJ databases">
        <title>Complete sequence of chromosome of Desulforudis audaxviator MP104C.</title>
        <authorList>
            <person name="Copeland A."/>
            <person name="Lucas S."/>
            <person name="Lapidus A."/>
            <person name="Barry K."/>
            <person name="Glavina del Rio T."/>
            <person name="Dalin E."/>
            <person name="Tice H."/>
            <person name="Bruce D."/>
            <person name="Pitluck S."/>
            <person name="Lowry S.R."/>
            <person name="Larimer F."/>
            <person name="Land M.L."/>
            <person name="Hauser L."/>
            <person name="Kyrpides N."/>
            <person name="Ivanova N.N."/>
            <person name="Richardson P."/>
        </authorList>
    </citation>
    <scope>NUCLEOTIDE SEQUENCE [LARGE SCALE GENOMIC DNA]</scope>
    <source>
        <strain>MP104C</strain>
    </source>
</reference>
<evidence type="ECO:0000255" key="1">
    <source>
        <dbReference type="HAMAP-Rule" id="MF_01454"/>
    </source>
</evidence>
<evidence type="ECO:0000255" key="2">
    <source>
        <dbReference type="PROSITE-ProRule" id="PRU01229"/>
    </source>
</evidence>
<evidence type="ECO:0000255" key="3">
    <source>
        <dbReference type="PROSITE-ProRule" id="PRU01231"/>
    </source>
</evidence>
<dbReference type="EC" id="3.6.5.-" evidence="1"/>
<dbReference type="EMBL" id="CP000860">
    <property type="protein sequence ID" value="ACA60366.1"/>
    <property type="molecule type" value="Genomic_DNA"/>
</dbReference>
<dbReference type="RefSeq" id="WP_012302942.1">
    <property type="nucleotide sequence ID" value="NC_010424.1"/>
</dbReference>
<dbReference type="SMR" id="B1I5V8"/>
<dbReference type="STRING" id="477974.Daud_1873"/>
<dbReference type="KEGG" id="dau:Daud_1873"/>
<dbReference type="eggNOG" id="COG0536">
    <property type="taxonomic scope" value="Bacteria"/>
</dbReference>
<dbReference type="HOGENOM" id="CLU_011747_2_1_9"/>
<dbReference type="OrthoDB" id="9807318at2"/>
<dbReference type="Proteomes" id="UP000008544">
    <property type="component" value="Chromosome"/>
</dbReference>
<dbReference type="GO" id="GO:0005737">
    <property type="term" value="C:cytoplasm"/>
    <property type="evidence" value="ECO:0007669"/>
    <property type="project" value="UniProtKB-SubCell"/>
</dbReference>
<dbReference type="GO" id="GO:0005525">
    <property type="term" value="F:GTP binding"/>
    <property type="evidence" value="ECO:0007669"/>
    <property type="project" value="UniProtKB-UniRule"/>
</dbReference>
<dbReference type="GO" id="GO:0003924">
    <property type="term" value="F:GTPase activity"/>
    <property type="evidence" value="ECO:0007669"/>
    <property type="project" value="UniProtKB-UniRule"/>
</dbReference>
<dbReference type="GO" id="GO:0000287">
    <property type="term" value="F:magnesium ion binding"/>
    <property type="evidence" value="ECO:0007669"/>
    <property type="project" value="InterPro"/>
</dbReference>
<dbReference type="GO" id="GO:0042254">
    <property type="term" value="P:ribosome biogenesis"/>
    <property type="evidence" value="ECO:0007669"/>
    <property type="project" value="UniProtKB-UniRule"/>
</dbReference>
<dbReference type="CDD" id="cd01898">
    <property type="entry name" value="Obg"/>
    <property type="match status" value="1"/>
</dbReference>
<dbReference type="FunFam" id="2.70.210.12:FF:000001">
    <property type="entry name" value="GTPase Obg"/>
    <property type="match status" value="1"/>
</dbReference>
<dbReference type="Gene3D" id="3.30.300.350">
    <property type="entry name" value="GTP-binding protein OBG, C-terminal domain"/>
    <property type="match status" value="1"/>
</dbReference>
<dbReference type="Gene3D" id="2.70.210.12">
    <property type="entry name" value="GTP1/OBG domain"/>
    <property type="match status" value="1"/>
</dbReference>
<dbReference type="Gene3D" id="3.40.50.300">
    <property type="entry name" value="P-loop containing nucleotide triphosphate hydrolases"/>
    <property type="match status" value="1"/>
</dbReference>
<dbReference type="HAMAP" id="MF_01454">
    <property type="entry name" value="GTPase_Obg"/>
    <property type="match status" value="1"/>
</dbReference>
<dbReference type="InterPro" id="IPR031167">
    <property type="entry name" value="G_OBG"/>
</dbReference>
<dbReference type="InterPro" id="IPR006073">
    <property type="entry name" value="GTP-bd"/>
</dbReference>
<dbReference type="InterPro" id="IPR014100">
    <property type="entry name" value="GTP-bd_Obg/CgtA"/>
</dbReference>
<dbReference type="InterPro" id="IPR036346">
    <property type="entry name" value="GTP-bd_prot_GTP1/OBG_C_sf"/>
</dbReference>
<dbReference type="InterPro" id="IPR006074">
    <property type="entry name" value="GTP1-OBG_CS"/>
</dbReference>
<dbReference type="InterPro" id="IPR006169">
    <property type="entry name" value="GTP1_OBG_dom"/>
</dbReference>
<dbReference type="InterPro" id="IPR036726">
    <property type="entry name" value="GTP1_OBG_dom_sf"/>
</dbReference>
<dbReference type="InterPro" id="IPR045086">
    <property type="entry name" value="OBG_GTPase"/>
</dbReference>
<dbReference type="InterPro" id="IPR015349">
    <property type="entry name" value="OCT_dom"/>
</dbReference>
<dbReference type="InterPro" id="IPR027417">
    <property type="entry name" value="P-loop_NTPase"/>
</dbReference>
<dbReference type="NCBIfam" id="TIGR02729">
    <property type="entry name" value="Obg_CgtA"/>
    <property type="match status" value="1"/>
</dbReference>
<dbReference type="NCBIfam" id="TIGR03595">
    <property type="entry name" value="Obg_CgtA_exten"/>
    <property type="match status" value="1"/>
</dbReference>
<dbReference type="NCBIfam" id="NF008954">
    <property type="entry name" value="PRK12296.1"/>
    <property type="match status" value="1"/>
</dbReference>
<dbReference type="NCBIfam" id="NF008955">
    <property type="entry name" value="PRK12297.1"/>
    <property type="match status" value="1"/>
</dbReference>
<dbReference type="NCBIfam" id="NF008956">
    <property type="entry name" value="PRK12299.1"/>
    <property type="match status" value="1"/>
</dbReference>
<dbReference type="PANTHER" id="PTHR11702">
    <property type="entry name" value="DEVELOPMENTALLY REGULATED GTP-BINDING PROTEIN-RELATED"/>
    <property type="match status" value="1"/>
</dbReference>
<dbReference type="PANTHER" id="PTHR11702:SF31">
    <property type="entry name" value="MITOCHONDRIAL RIBOSOME-ASSOCIATED GTPASE 2"/>
    <property type="match status" value="1"/>
</dbReference>
<dbReference type="Pfam" id="PF09269">
    <property type="entry name" value="DUF1967"/>
    <property type="match status" value="1"/>
</dbReference>
<dbReference type="Pfam" id="PF01018">
    <property type="entry name" value="GTP1_OBG"/>
    <property type="match status" value="1"/>
</dbReference>
<dbReference type="Pfam" id="PF01926">
    <property type="entry name" value="MMR_HSR1"/>
    <property type="match status" value="1"/>
</dbReference>
<dbReference type="PRINTS" id="PR00326">
    <property type="entry name" value="GTP1OBG"/>
</dbReference>
<dbReference type="SUPFAM" id="SSF102741">
    <property type="entry name" value="Obg GTP-binding protein C-terminal domain"/>
    <property type="match status" value="1"/>
</dbReference>
<dbReference type="SUPFAM" id="SSF82051">
    <property type="entry name" value="Obg GTP-binding protein N-terminal domain"/>
    <property type="match status" value="1"/>
</dbReference>
<dbReference type="SUPFAM" id="SSF52540">
    <property type="entry name" value="P-loop containing nucleoside triphosphate hydrolases"/>
    <property type="match status" value="1"/>
</dbReference>
<dbReference type="PROSITE" id="PS51710">
    <property type="entry name" value="G_OBG"/>
    <property type="match status" value="1"/>
</dbReference>
<dbReference type="PROSITE" id="PS00905">
    <property type="entry name" value="GTP1_OBG"/>
    <property type="match status" value="1"/>
</dbReference>
<dbReference type="PROSITE" id="PS51883">
    <property type="entry name" value="OBG"/>
    <property type="match status" value="1"/>
</dbReference>
<dbReference type="PROSITE" id="PS51881">
    <property type="entry name" value="OCT"/>
    <property type="match status" value="1"/>
</dbReference>
<keyword id="KW-0963">Cytoplasm</keyword>
<keyword id="KW-0342">GTP-binding</keyword>
<keyword id="KW-0378">Hydrolase</keyword>
<keyword id="KW-0460">Magnesium</keyword>
<keyword id="KW-0479">Metal-binding</keyword>
<keyword id="KW-0547">Nucleotide-binding</keyword>
<keyword id="KW-1185">Reference proteome</keyword>
<feature type="chain" id="PRO_0000385886" description="GTPase Obg">
    <location>
        <begin position="1"/>
        <end position="425"/>
    </location>
</feature>
<feature type="domain" description="Obg" evidence="3">
    <location>
        <begin position="1"/>
        <end position="158"/>
    </location>
</feature>
<feature type="domain" description="OBG-type G" evidence="1">
    <location>
        <begin position="159"/>
        <end position="329"/>
    </location>
</feature>
<feature type="domain" description="OCT" evidence="2">
    <location>
        <begin position="341"/>
        <end position="421"/>
    </location>
</feature>
<feature type="binding site" evidence="1">
    <location>
        <begin position="165"/>
        <end position="172"/>
    </location>
    <ligand>
        <name>GTP</name>
        <dbReference type="ChEBI" id="CHEBI:37565"/>
    </ligand>
</feature>
<feature type="binding site" evidence="1">
    <location>
        <position position="172"/>
    </location>
    <ligand>
        <name>Mg(2+)</name>
        <dbReference type="ChEBI" id="CHEBI:18420"/>
    </ligand>
</feature>
<feature type="binding site" evidence="1">
    <location>
        <begin position="190"/>
        <end position="194"/>
    </location>
    <ligand>
        <name>GTP</name>
        <dbReference type="ChEBI" id="CHEBI:37565"/>
    </ligand>
</feature>
<feature type="binding site" evidence="1">
    <location>
        <position position="192"/>
    </location>
    <ligand>
        <name>Mg(2+)</name>
        <dbReference type="ChEBI" id="CHEBI:18420"/>
    </ligand>
</feature>
<feature type="binding site" evidence="1">
    <location>
        <begin position="212"/>
        <end position="215"/>
    </location>
    <ligand>
        <name>GTP</name>
        <dbReference type="ChEBI" id="CHEBI:37565"/>
    </ligand>
</feature>
<feature type="binding site" evidence="1">
    <location>
        <begin position="282"/>
        <end position="285"/>
    </location>
    <ligand>
        <name>GTP</name>
        <dbReference type="ChEBI" id="CHEBI:37565"/>
    </ligand>
</feature>
<feature type="binding site" evidence="1">
    <location>
        <begin position="310"/>
        <end position="312"/>
    </location>
    <ligand>
        <name>GTP</name>
        <dbReference type="ChEBI" id="CHEBI:37565"/>
    </ligand>
</feature>
<accession>B1I5V8</accession>
<name>OBG_DESAP</name>